<reference key="1">
    <citation type="submission" date="2008-04" db="EMBL/GenBank/DDBJ databases">
        <title>Complete sequence of Clostridium botulinum strain Eklund.</title>
        <authorList>
            <person name="Brinkac L.M."/>
            <person name="Brown J.L."/>
            <person name="Bruce D."/>
            <person name="Detter C."/>
            <person name="Munk C."/>
            <person name="Smith L.A."/>
            <person name="Smith T.J."/>
            <person name="Sutton G."/>
            <person name="Brettin T.S."/>
        </authorList>
    </citation>
    <scope>NUCLEOTIDE SEQUENCE [LARGE SCALE GENOMIC DNA]</scope>
    <source>
        <strain>Eklund 17B / Type B</strain>
    </source>
</reference>
<dbReference type="EC" id="2.7.8.13" evidence="1"/>
<dbReference type="EMBL" id="CP001056">
    <property type="protein sequence ID" value="ACD23486.1"/>
    <property type="molecule type" value="Genomic_DNA"/>
</dbReference>
<dbReference type="SMR" id="B2TS25"/>
<dbReference type="KEGG" id="cbk:CLL_A2443"/>
<dbReference type="PATRIC" id="fig|935198.13.peg.2403"/>
<dbReference type="HOGENOM" id="CLU_023982_0_1_9"/>
<dbReference type="UniPathway" id="UPA00219"/>
<dbReference type="Proteomes" id="UP000001195">
    <property type="component" value="Chromosome"/>
</dbReference>
<dbReference type="GO" id="GO:0005886">
    <property type="term" value="C:plasma membrane"/>
    <property type="evidence" value="ECO:0007669"/>
    <property type="project" value="UniProtKB-SubCell"/>
</dbReference>
<dbReference type="GO" id="GO:0046872">
    <property type="term" value="F:metal ion binding"/>
    <property type="evidence" value="ECO:0007669"/>
    <property type="project" value="UniProtKB-KW"/>
</dbReference>
<dbReference type="GO" id="GO:0008963">
    <property type="term" value="F:phospho-N-acetylmuramoyl-pentapeptide-transferase activity"/>
    <property type="evidence" value="ECO:0007669"/>
    <property type="project" value="UniProtKB-UniRule"/>
</dbReference>
<dbReference type="GO" id="GO:0051992">
    <property type="term" value="F:UDP-N-acetylmuramoyl-L-alanyl-D-glutamyl-meso-2,6-diaminopimelyl-D-alanyl-D-alanine:undecaprenyl-phosphate transferase activity"/>
    <property type="evidence" value="ECO:0007669"/>
    <property type="project" value="RHEA"/>
</dbReference>
<dbReference type="GO" id="GO:0051301">
    <property type="term" value="P:cell division"/>
    <property type="evidence" value="ECO:0007669"/>
    <property type="project" value="UniProtKB-KW"/>
</dbReference>
<dbReference type="GO" id="GO:0071555">
    <property type="term" value="P:cell wall organization"/>
    <property type="evidence" value="ECO:0007669"/>
    <property type="project" value="UniProtKB-KW"/>
</dbReference>
<dbReference type="GO" id="GO:0009252">
    <property type="term" value="P:peptidoglycan biosynthetic process"/>
    <property type="evidence" value="ECO:0007669"/>
    <property type="project" value="UniProtKB-UniRule"/>
</dbReference>
<dbReference type="GO" id="GO:0008360">
    <property type="term" value="P:regulation of cell shape"/>
    <property type="evidence" value="ECO:0007669"/>
    <property type="project" value="UniProtKB-KW"/>
</dbReference>
<dbReference type="CDD" id="cd06852">
    <property type="entry name" value="GT_MraY"/>
    <property type="match status" value="1"/>
</dbReference>
<dbReference type="HAMAP" id="MF_00038">
    <property type="entry name" value="MraY"/>
    <property type="match status" value="1"/>
</dbReference>
<dbReference type="InterPro" id="IPR000715">
    <property type="entry name" value="Glycosyl_transferase_4"/>
</dbReference>
<dbReference type="InterPro" id="IPR003524">
    <property type="entry name" value="PNAcMuramoyl-5peptid_Trfase"/>
</dbReference>
<dbReference type="InterPro" id="IPR018480">
    <property type="entry name" value="PNAcMuramoyl-5peptid_Trfase_CS"/>
</dbReference>
<dbReference type="NCBIfam" id="TIGR00445">
    <property type="entry name" value="mraY"/>
    <property type="match status" value="1"/>
</dbReference>
<dbReference type="PANTHER" id="PTHR22926">
    <property type="entry name" value="PHOSPHO-N-ACETYLMURAMOYL-PENTAPEPTIDE-TRANSFERASE"/>
    <property type="match status" value="1"/>
</dbReference>
<dbReference type="PANTHER" id="PTHR22926:SF5">
    <property type="entry name" value="PHOSPHO-N-ACETYLMURAMOYL-PENTAPEPTIDE-TRANSFERASE HOMOLOG"/>
    <property type="match status" value="1"/>
</dbReference>
<dbReference type="Pfam" id="PF00953">
    <property type="entry name" value="Glycos_transf_4"/>
    <property type="match status" value="1"/>
</dbReference>
<dbReference type="Pfam" id="PF10555">
    <property type="entry name" value="MraY_sig1"/>
    <property type="match status" value="1"/>
</dbReference>
<dbReference type="PROSITE" id="PS01347">
    <property type="entry name" value="MRAY_1"/>
    <property type="match status" value="1"/>
</dbReference>
<dbReference type="PROSITE" id="PS01348">
    <property type="entry name" value="MRAY_2"/>
    <property type="match status" value="1"/>
</dbReference>
<keyword id="KW-0131">Cell cycle</keyword>
<keyword id="KW-0132">Cell division</keyword>
<keyword id="KW-1003">Cell membrane</keyword>
<keyword id="KW-0133">Cell shape</keyword>
<keyword id="KW-0961">Cell wall biogenesis/degradation</keyword>
<keyword id="KW-0460">Magnesium</keyword>
<keyword id="KW-0472">Membrane</keyword>
<keyword id="KW-0479">Metal-binding</keyword>
<keyword id="KW-0573">Peptidoglycan synthesis</keyword>
<keyword id="KW-0808">Transferase</keyword>
<keyword id="KW-0812">Transmembrane</keyword>
<keyword id="KW-1133">Transmembrane helix</keyword>
<feature type="chain" id="PRO_1000090613" description="Phospho-N-acetylmuramoyl-pentapeptide-transferase">
    <location>
        <begin position="1"/>
        <end position="324"/>
    </location>
</feature>
<feature type="transmembrane region" description="Helical" evidence="1">
    <location>
        <begin position="13"/>
        <end position="33"/>
    </location>
</feature>
<feature type="transmembrane region" description="Helical" evidence="1">
    <location>
        <begin position="57"/>
        <end position="77"/>
    </location>
</feature>
<feature type="transmembrane region" description="Helical" evidence="1">
    <location>
        <begin position="85"/>
        <end position="105"/>
    </location>
</feature>
<feature type="transmembrane region" description="Helical" evidence="1">
    <location>
        <begin position="121"/>
        <end position="141"/>
    </location>
</feature>
<feature type="transmembrane region" description="Helical" evidence="1">
    <location>
        <begin position="143"/>
        <end position="163"/>
    </location>
</feature>
<feature type="transmembrane region" description="Helical" evidence="1">
    <location>
        <begin position="179"/>
        <end position="199"/>
    </location>
</feature>
<feature type="transmembrane region" description="Helical" evidence="1">
    <location>
        <begin position="201"/>
        <end position="221"/>
    </location>
</feature>
<feature type="transmembrane region" description="Helical" evidence="1">
    <location>
        <begin position="238"/>
        <end position="260"/>
    </location>
</feature>
<feature type="transmembrane region" description="Helical" evidence="1">
    <location>
        <begin position="303"/>
        <end position="323"/>
    </location>
</feature>
<name>MRAY_CLOBB</name>
<gene>
    <name evidence="1" type="primary">mraY</name>
    <name type="ordered locus">CLL_A2443</name>
</gene>
<evidence type="ECO:0000255" key="1">
    <source>
        <dbReference type="HAMAP-Rule" id="MF_00038"/>
    </source>
</evidence>
<sequence>MGDTIKELLNPTVLSALLMGFAFSMVLGPIFIPMLHKLKFGQNIRTDGPKSHLKKSGTPTMGGLIFFISVSVTMLIIEYKPTDEGMIVLYSLIAFGIIGFLDDILKIIHRDNLGLRAYQKMILLLLFSIALAYYGYTNIGTDIIIPFMNSKLNLGIFYIPLVVVYYAATTNAVNLTDGIDGLASSVTVIVLTFFAIVGFKTGHYQVGVFSIALAGALLGFLRYNAFPAKIFMGDTGSLALGGAIATIALILKMPLFIIIVGGIYVVETLSVIIQVTSFKTTGKRVFKMAPIHHHFEQCGWSEVKLVTVFSIITLILCIIGFIAL</sequence>
<proteinExistence type="inferred from homology"/>
<accession>B2TS25</accession>
<organism>
    <name type="scientific">Clostridium botulinum (strain Eklund 17B / Type B)</name>
    <dbReference type="NCBI Taxonomy" id="935198"/>
    <lineage>
        <taxon>Bacteria</taxon>
        <taxon>Bacillati</taxon>
        <taxon>Bacillota</taxon>
        <taxon>Clostridia</taxon>
        <taxon>Eubacteriales</taxon>
        <taxon>Clostridiaceae</taxon>
        <taxon>Clostridium</taxon>
    </lineage>
</organism>
<protein>
    <recommendedName>
        <fullName evidence="1">Phospho-N-acetylmuramoyl-pentapeptide-transferase</fullName>
        <ecNumber evidence="1">2.7.8.13</ecNumber>
    </recommendedName>
    <alternativeName>
        <fullName evidence="1">UDP-MurNAc-pentapeptide phosphotransferase</fullName>
    </alternativeName>
</protein>
<comment type="function">
    <text evidence="1">Catalyzes the initial step of the lipid cycle reactions in the biosynthesis of the cell wall peptidoglycan: transfers peptidoglycan precursor phospho-MurNAc-pentapeptide from UDP-MurNAc-pentapeptide onto the lipid carrier undecaprenyl phosphate, yielding undecaprenyl-pyrophosphoryl-MurNAc-pentapeptide, known as lipid I.</text>
</comment>
<comment type="catalytic activity">
    <reaction evidence="1">
        <text>UDP-N-acetyl-alpha-D-muramoyl-L-alanyl-gamma-D-glutamyl-meso-2,6-diaminopimeloyl-D-alanyl-D-alanine + di-trans,octa-cis-undecaprenyl phosphate = di-trans,octa-cis-undecaprenyl diphospho-N-acetyl-alpha-D-muramoyl-L-alanyl-D-glutamyl-meso-2,6-diaminopimeloyl-D-alanyl-D-alanine + UMP</text>
        <dbReference type="Rhea" id="RHEA:28386"/>
        <dbReference type="ChEBI" id="CHEBI:57865"/>
        <dbReference type="ChEBI" id="CHEBI:60392"/>
        <dbReference type="ChEBI" id="CHEBI:61386"/>
        <dbReference type="ChEBI" id="CHEBI:61387"/>
        <dbReference type="EC" id="2.7.8.13"/>
    </reaction>
</comment>
<comment type="cofactor">
    <cofactor evidence="1">
        <name>Mg(2+)</name>
        <dbReference type="ChEBI" id="CHEBI:18420"/>
    </cofactor>
</comment>
<comment type="pathway">
    <text evidence="1">Cell wall biogenesis; peptidoglycan biosynthesis.</text>
</comment>
<comment type="subcellular location">
    <subcellularLocation>
        <location evidence="1">Cell membrane</location>
        <topology evidence="1">Multi-pass membrane protein</topology>
    </subcellularLocation>
</comment>
<comment type="similarity">
    <text evidence="1">Belongs to the glycosyltransferase 4 family. MraY subfamily.</text>
</comment>